<protein>
    <recommendedName>
        <fullName evidence="3">Nucleolar protein 6</fullName>
    </recommendedName>
    <alternativeName>
        <fullName evidence="1">Maternal transcript 89Ba</fullName>
    </alternativeName>
</protein>
<keyword id="KW-0158">Chromosome</keyword>
<keyword id="KW-0539">Nucleus</keyword>
<keyword id="KW-1185">Reference proteome</keyword>
<keyword id="KW-0694">RNA-binding</keyword>
<name>NOL6_DROMO</name>
<evidence type="ECO:0000250" key="1">
    <source>
        <dbReference type="UniProtKB" id="Q8IH00"/>
    </source>
</evidence>
<evidence type="ECO:0000250" key="2">
    <source>
        <dbReference type="UniProtKB" id="Q8R5K4"/>
    </source>
</evidence>
<evidence type="ECO:0000250" key="3">
    <source>
        <dbReference type="UniProtKB" id="Q9H6R4"/>
    </source>
</evidence>
<evidence type="ECO:0000255" key="4"/>
<evidence type="ECO:0000256" key="5">
    <source>
        <dbReference type="SAM" id="MobiDB-lite"/>
    </source>
</evidence>
<evidence type="ECO:0000312" key="6">
    <source>
        <dbReference type="EMBL" id="EDW15138.1"/>
    </source>
</evidence>
<comment type="function">
    <text evidence="3">Part of the small subunit (SSU) processome, first precursor of the small eukaryotic ribosomal subunit. During the assembly of the SSU processome in the nucleolus, many ribosome biogenesis factors, an RNA chaperone and ribosomal proteins associate with the nascent pre-rRNA and work in concert to generate RNA folding, modifications, rearrangements and cleavage as well as targeted degradation of pre-ribosomal RNA by the RNA exosome.</text>
</comment>
<comment type="subunit">
    <text evidence="3">Part of the small subunit (SSU) processome, composed of more than 70 proteins and the RNA chaperone small nucleolar RNA (snoRNA) U3.</text>
</comment>
<comment type="subcellular location">
    <subcellularLocation>
        <location evidence="3">Nucleus</location>
        <location evidence="3">Nucleolus</location>
    </subcellularLocation>
    <subcellularLocation>
        <location evidence="2">Chromosome</location>
    </subcellularLocation>
    <text evidence="2">Localizes to condensed chromosomes in mitosis.</text>
</comment>
<comment type="similarity">
    <text evidence="4">Belongs to the NRAP family.</text>
</comment>
<organism>
    <name type="scientific">Drosophila mojavensis</name>
    <name type="common">Fruit fly</name>
    <dbReference type="NCBI Taxonomy" id="7230"/>
    <lineage>
        <taxon>Eukaryota</taxon>
        <taxon>Metazoa</taxon>
        <taxon>Ecdysozoa</taxon>
        <taxon>Arthropoda</taxon>
        <taxon>Hexapoda</taxon>
        <taxon>Insecta</taxon>
        <taxon>Pterygota</taxon>
        <taxon>Neoptera</taxon>
        <taxon>Endopterygota</taxon>
        <taxon>Diptera</taxon>
        <taxon>Brachycera</taxon>
        <taxon>Muscomorpha</taxon>
        <taxon>Ephydroidea</taxon>
        <taxon>Drosophilidae</taxon>
        <taxon>Drosophila</taxon>
    </lineage>
</organism>
<proteinExistence type="inferred from homology"/>
<dbReference type="EMBL" id="CH933806">
    <property type="protein sequence ID" value="EDW15138.1"/>
    <property type="molecule type" value="Genomic_DNA"/>
</dbReference>
<dbReference type="SMR" id="B4K5S6"/>
<dbReference type="FunCoup" id="B4K5S6">
    <property type="interactions" value="1612"/>
</dbReference>
<dbReference type="EnsemblMetazoa" id="FBtr0175378">
    <property type="protein sequence ID" value="FBpp0173870"/>
    <property type="gene ID" value="FBgn0147375"/>
</dbReference>
<dbReference type="EnsemblMetazoa" id="XM_001999641.4">
    <property type="protein sequence ID" value="XP_001999677.1"/>
    <property type="gene ID" value="LOC6573611"/>
</dbReference>
<dbReference type="GeneID" id="6573611"/>
<dbReference type="KEGG" id="dmo:Dmoj_GI24653"/>
<dbReference type="CTD" id="41973"/>
<dbReference type="eggNOG" id="KOG2054">
    <property type="taxonomic scope" value="Eukaryota"/>
</dbReference>
<dbReference type="HOGENOM" id="CLU_003502_0_1_1"/>
<dbReference type="InParanoid" id="B4K5S6"/>
<dbReference type="OMA" id="NPHGGKE"/>
<dbReference type="OrthoDB" id="10251401at2759"/>
<dbReference type="PhylomeDB" id="B4K5S6"/>
<dbReference type="Proteomes" id="UP000009192">
    <property type="component" value="Unassembled WGS sequence"/>
</dbReference>
<dbReference type="GO" id="GO:0000794">
    <property type="term" value="C:condensed nuclear chromosome"/>
    <property type="evidence" value="ECO:0000250"/>
    <property type="project" value="UniProtKB"/>
</dbReference>
<dbReference type="GO" id="GO:0032545">
    <property type="term" value="C:CURI complex"/>
    <property type="evidence" value="ECO:0007669"/>
    <property type="project" value="TreeGrafter"/>
</dbReference>
<dbReference type="GO" id="GO:0032040">
    <property type="term" value="C:small-subunit processome"/>
    <property type="evidence" value="ECO:0000250"/>
    <property type="project" value="UniProtKB"/>
</dbReference>
<dbReference type="GO" id="GO:0034456">
    <property type="term" value="C:UTP-C complex"/>
    <property type="evidence" value="ECO:0007669"/>
    <property type="project" value="TreeGrafter"/>
</dbReference>
<dbReference type="GO" id="GO:0003723">
    <property type="term" value="F:RNA binding"/>
    <property type="evidence" value="ECO:0007669"/>
    <property type="project" value="UniProtKB-KW"/>
</dbReference>
<dbReference type="GO" id="GO:0042274">
    <property type="term" value="P:ribosomal small subunit biogenesis"/>
    <property type="evidence" value="ECO:0000250"/>
    <property type="project" value="UniProtKB"/>
</dbReference>
<dbReference type="GO" id="GO:0006364">
    <property type="term" value="P:rRNA processing"/>
    <property type="evidence" value="ECO:0007669"/>
    <property type="project" value="TreeGrafter"/>
</dbReference>
<dbReference type="GO" id="GO:0006409">
    <property type="term" value="P:tRNA export from nucleus"/>
    <property type="evidence" value="ECO:0007669"/>
    <property type="project" value="TreeGrafter"/>
</dbReference>
<dbReference type="FunFam" id="1.10.1410.10:FF:000005">
    <property type="entry name" value="Nucleolar protein 6"/>
    <property type="match status" value="1"/>
</dbReference>
<dbReference type="FunFam" id="1.10.1410.10:FF:000006">
    <property type="entry name" value="Nucleolar protein 6"/>
    <property type="match status" value="1"/>
</dbReference>
<dbReference type="FunFam" id="3.30.70.3030:FF:000008">
    <property type="entry name" value="Nucleolar protein 6"/>
    <property type="match status" value="1"/>
</dbReference>
<dbReference type="Gene3D" id="1.10.1410.10">
    <property type="match status" value="2"/>
</dbReference>
<dbReference type="Gene3D" id="3.30.70.3030">
    <property type="match status" value="1"/>
</dbReference>
<dbReference type="InterPro" id="IPR005554">
    <property type="entry name" value="NOL6/Upt22"/>
</dbReference>
<dbReference type="InterPro" id="IPR035082">
    <property type="entry name" value="Nrap_D1"/>
</dbReference>
<dbReference type="InterPro" id="IPR035367">
    <property type="entry name" value="Nrap_D2"/>
</dbReference>
<dbReference type="InterPro" id="IPR035368">
    <property type="entry name" value="Nrap_D3"/>
</dbReference>
<dbReference type="InterPro" id="IPR035369">
    <property type="entry name" value="Nrap_D4"/>
</dbReference>
<dbReference type="InterPro" id="IPR035370">
    <property type="entry name" value="Nrap_D5"/>
</dbReference>
<dbReference type="InterPro" id="IPR035371">
    <property type="entry name" value="Nrap_D6"/>
</dbReference>
<dbReference type="PANTHER" id="PTHR17972:SF0">
    <property type="entry name" value="NUCLEOLAR PROTEIN 6"/>
    <property type="match status" value="1"/>
</dbReference>
<dbReference type="PANTHER" id="PTHR17972">
    <property type="entry name" value="NUCLEOLAR RNA-ASSOCIATED PROTEIN"/>
    <property type="match status" value="1"/>
</dbReference>
<dbReference type="Pfam" id="PF03813">
    <property type="entry name" value="Nrap"/>
    <property type="match status" value="1"/>
</dbReference>
<dbReference type="Pfam" id="PF17403">
    <property type="entry name" value="Nrap_D2"/>
    <property type="match status" value="1"/>
</dbReference>
<dbReference type="Pfam" id="PF17404">
    <property type="entry name" value="Nrap_D3"/>
    <property type="match status" value="1"/>
</dbReference>
<dbReference type="Pfam" id="PF17405">
    <property type="entry name" value="Nrap_D4"/>
    <property type="match status" value="1"/>
</dbReference>
<dbReference type="Pfam" id="PF17406">
    <property type="entry name" value="Nrap_D5"/>
    <property type="match status" value="1"/>
</dbReference>
<dbReference type="Pfam" id="PF17407">
    <property type="entry name" value="Nrap_D6"/>
    <property type="match status" value="1"/>
</dbReference>
<feature type="chain" id="PRO_0000383625" description="Nucleolar protein 6">
    <location>
        <begin position="1"/>
        <end position="1187"/>
    </location>
</feature>
<feature type="region of interest" description="Disordered" evidence="5">
    <location>
        <begin position="1"/>
        <end position="64"/>
    </location>
</feature>
<feature type="region of interest" description="Disordered" evidence="5">
    <location>
        <begin position="1134"/>
        <end position="1187"/>
    </location>
</feature>
<feature type="compositionally biased region" description="Basic and acidic residues" evidence="5">
    <location>
        <begin position="1"/>
        <end position="20"/>
    </location>
</feature>
<accession>B4K5S6</accession>
<gene>
    <name evidence="1" type="primary">Mat89Ba</name>
    <name type="ORF">GI24653</name>
</gene>
<sequence>MGRIKENQSKKKTLLRDSKAYSDQAAAAVTSSDDGFDEPKEITAPKRKLPCGNSDAKKKKFKHPEANVKPPTLEEIKEIRDTRNLFHSNLFKLQVKEMLEELQLKPKYSNYIENWLETFTTAVHEFQDGLLDNCQLEVPLHLHKKLFNFQFLTPTAEPKLIGAAAIGTLLGPKLVVDVALEMPEKCFQKEDYRNLIFDQKRALYLATVASKLKELPACAADHFAYNYHANNPLKPVLELTPTGKIGKHLSLRLYITAPKAIFKLSRFVPWNNNVRPSFFGDKWDESETLPSTQHYNANVLFDLTLAENQKLLLSTFSGHRNFQEGLLLLKVWLRQRQLDVGFSGFSAHILAAYIVYLKQNRLLHQSSSSYQVARTVWNQLANSDWTQGITLCPQQPHQLSTLAGYYDVCFMDVTGYYNICANLPLSVYKAVCAEAKLAVELLNDVRVNSFSQIFMQASPLYTRMDNILKITNPATVDQLLELHVQPQVKYDYANYAHPQLLKLLTDLLQKGLGKRVHAILPLETASKSWTVDTKAPIIGRSLTLGLILDPEHAFEVLDKGPATNEDAEGAAEFRKFWGEKSNLRRFQDGSITEAVVWAAVTDAPSKKRLIVRQIVLHLLEQHLQLEQSDVHYIAGELDIIYSLTSSFKVAKLQTKLKLEQETDAEAVTPLVIHCYDALARQLHTLGDLPLDIVSISGISPVFRYCEPQPLLPQARLVADRMHAGHVLRVIIQLGPSGKWPNELGALRSLKTAFLIQIGKQLKEQQHLHTQLCKEGLLVLKQGYCFLLELAHTKEVALLKQQQTERGVTAYVDNAASREIERRHYILPRVSGALHALHQSHSTFGPTVLIAKRWLATQMIDDGLWPSIATELLVAHLFQQRQMPHTTVAPQTGFIRFLQLLAHSDWASELFLLNFNNSWTEQQITDLEHSYRSERDSYPALCLATAYDQQHAGRLWTTDDCPSKPVLGRVTLLARHALQLIESSLLSPSLGFVRPAQLFIASGEGYDLVIELKPDLLPNTLCYDLGSPFLPFSQRNFRLPLAGIDQLAKIVQQLRSAYSEYAAFFYNPHGGKELAIVWRPASEFAPKPFKVNELQACTPCSVGKVQVVRDTLVEDFKLLLKDFYLRICTPEQLKREQRSHNKPKRYFDDQSEPDVDKPQKKKKKKGTVTKPTDLKKRLKKSKSLSALC</sequence>
<reference evidence="6" key="1">
    <citation type="journal article" date="2007" name="Nature">
        <title>Evolution of genes and genomes on the Drosophila phylogeny.</title>
        <authorList>
            <consortium name="Drosophila 12 genomes consortium"/>
        </authorList>
    </citation>
    <scope>NUCLEOTIDE SEQUENCE [LARGE SCALE GENOMIC DNA]</scope>
    <source>
        <strain evidence="6">Tucson 15081-1352.22</strain>
    </source>
</reference>